<name>NAGB_LISMH</name>
<feature type="chain" id="PRO_1000165022" description="Glucosamine-6-phosphate deaminase">
    <location>
        <begin position="1"/>
        <end position="234"/>
    </location>
</feature>
<feature type="active site" description="Proton acceptor; for enolization step" evidence="1">
    <location>
        <position position="63"/>
    </location>
</feature>
<feature type="active site" description="For ring-opening step" evidence="1">
    <location>
        <position position="129"/>
    </location>
</feature>
<feature type="active site" description="Proton acceptor; for ring-opening step" evidence="1">
    <location>
        <position position="131"/>
    </location>
</feature>
<feature type="active site" description="For ring-opening step" evidence="1">
    <location>
        <position position="136"/>
    </location>
</feature>
<dbReference type="EC" id="3.5.99.6" evidence="1"/>
<dbReference type="EMBL" id="CP001175">
    <property type="protein sequence ID" value="ACK40007.1"/>
    <property type="molecule type" value="Genomic_DNA"/>
</dbReference>
<dbReference type="RefSeq" id="WP_003729859.1">
    <property type="nucleotide sequence ID" value="NC_011660.1"/>
</dbReference>
<dbReference type="SMR" id="B8DEH8"/>
<dbReference type="KEGG" id="lmh:LMHCC_1665"/>
<dbReference type="HOGENOM" id="CLU_049611_1_0_9"/>
<dbReference type="UniPathway" id="UPA00629">
    <property type="reaction ID" value="UER00684"/>
</dbReference>
<dbReference type="GO" id="GO:0005737">
    <property type="term" value="C:cytoplasm"/>
    <property type="evidence" value="ECO:0007669"/>
    <property type="project" value="TreeGrafter"/>
</dbReference>
<dbReference type="GO" id="GO:0004342">
    <property type="term" value="F:glucosamine-6-phosphate deaminase activity"/>
    <property type="evidence" value="ECO:0007669"/>
    <property type="project" value="UniProtKB-UniRule"/>
</dbReference>
<dbReference type="GO" id="GO:0042802">
    <property type="term" value="F:identical protein binding"/>
    <property type="evidence" value="ECO:0007669"/>
    <property type="project" value="TreeGrafter"/>
</dbReference>
<dbReference type="GO" id="GO:0005975">
    <property type="term" value="P:carbohydrate metabolic process"/>
    <property type="evidence" value="ECO:0007669"/>
    <property type="project" value="InterPro"/>
</dbReference>
<dbReference type="GO" id="GO:0006043">
    <property type="term" value="P:glucosamine catabolic process"/>
    <property type="evidence" value="ECO:0007669"/>
    <property type="project" value="TreeGrafter"/>
</dbReference>
<dbReference type="GO" id="GO:0006046">
    <property type="term" value="P:N-acetylglucosamine catabolic process"/>
    <property type="evidence" value="ECO:0007669"/>
    <property type="project" value="TreeGrafter"/>
</dbReference>
<dbReference type="GO" id="GO:0019262">
    <property type="term" value="P:N-acetylneuraminate catabolic process"/>
    <property type="evidence" value="ECO:0007669"/>
    <property type="project" value="UniProtKB-UniRule"/>
</dbReference>
<dbReference type="CDD" id="cd01399">
    <property type="entry name" value="GlcN6P_deaminase"/>
    <property type="match status" value="1"/>
</dbReference>
<dbReference type="FunFam" id="3.40.50.1360:FF:000003">
    <property type="entry name" value="Glucosamine-6-phosphate deaminase"/>
    <property type="match status" value="1"/>
</dbReference>
<dbReference type="Gene3D" id="3.40.50.1360">
    <property type="match status" value="1"/>
</dbReference>
<dbReference type="HAMAP" id="MF_01241">
    <property type="entry name" value="GlcN6P_deamin"/>
    <property type="match status" value="1"/>
</dbReference>
<dbReference type="InterPro" id="IPR006148">
    <property type="entry name" value="Glc/Gal-6P_isomerase"/>
</dbReference>
<dbReference type="InterPro" id="IPR004547">
    <property type="entry name" value="Glucosamine6P_isomerase"/>
</dbReference>
<dbReference type="InterPro" id="IPR018321">
    <property type="entry name" value="Glucosamine6P_isomerase_CS"/>
</dbReference>
<dbReference type="InterPro" id="IPR037171">
    <property type="entry name" value="NagB/RpiA_transferase-like"/>
</dbReference>
<dbReference type="NCBIfam" id="TIGR00502">
    <property type="entry name" value="nagB"/>
    <property type="match status" value="1"/>
</dbReference>
<dbReference type="PANTHER" id="PTHR11280">
    <property type="entry name" value="GLUCOSAMINE-6-PHOSPHATE ISOMERASE"/>
    <property type="match status" value="1"/>
</dbReference>
<dbReference type="PANTHER" id="PTHR11280:SF5">
    <property type="entry name" value="GLUCOSAMINE-6-PHOSPHATE ISOMERASE"/>
    <property type="match status" value="1"/>
</dbReference>
<dbReference type="Pfam" id="PF01182">
    <property type="entry name" value="Glucosamine_iso"/>
    <property type="match status" value="1"/>
</dbReference>
<dbReference type="SUPFAM" id="SSF100950">
    <property type="entry name" value="NagB/RpiA/CoA transferase-like"/>
    <property type="match status" value="1"/>
</dbReference>
<dbReference type="PROSITE" id="PS01161">
    <property type="entry name" value="GLC_GALNAC_ISOMERASE"/>
    <property type="match status" value="1"/>
</dbReference>
<protein>
    <recommendedName>
        <fullName evidence="1">Glucosamine-6-phosphate deaminase</fullName>
        <ecNumber evidence="1">3.5.99.6</ecNumber>
    </recommendedName>
    <alternativeName>
        <fullName evidence="1">GlcN6P deaminase</fullName>
        <shortName evidence="1">GNPDA</shortName>
    </alternativeName>
    <alternativeName>
        <fullName evidence="1">Glucosamine-6-phosphate isomerase</fullName>
    </alternativeName>
</protein>
<sequence length="234" mass="25552">MQLITTENKLAGSKKALEIIEKGITSGEVNTLGLATGSTPETLYAELVKSDVDTKNVTTTNLDEYVGLAANDPNSYHYYMNELLFSKKAFKESFLPNGEATDAEAECARYEEILSEHPIDIQVLGIGTNGHIGFNEPGTSFDSLTHKVVLTDSTREANKRFFEREEDVPTHAYSMGIKSIMNAKKIILLAFGENKAQAIKETIKGPVDVNCPASVLQNHPDVTVILDNEAASLL</sequence>
<proteinExistence type="inferred from homology"/>
<comment type="function">
    <text evidence="1">Catalyzes the reversible isomerization-deamination of glucosamine 6-phosphate (GlcN6P) to form fructose 6-phosphate (Fru6P) and ammonium ion.</text>
</comment>
<comment type="catalytic activity">
    <reaction evidence="1">
        <text>alpha-D-glucosamine 6-phosphate + H2O = beta-D-fructose 6-phosphate + NH4(+)</text>
        <dbReference type="Rhea" id="RHEA:12172"/>
        <dbReference type="ChEBI" id="CHEBI:15377"/>
        <dbReference type="ChEBI" id="CHEBI:28938"/>
        <dbReference type="ChEBI" id="CHEBI:57634"/>
        <dbReference type="ChEBI" id="CHEBI:75989"/>
        <dbReference type="EC" id="3.5.99.6"/>
    </reaction>
</comment>
<comment type="pathway">
    <text evidence="1">Amino-sugar metabolism; N-acetylneuraminate degradation; D-fructose 6-phosphate from N-acetylneuraminate: step 5/5.</text>
</comment>
<comment type="similarity">
    <text evidence="1">Belongs to the glucosamine/galactosamine-6-phosphate isomerase family. NagB subfamily.</text>
</comment>
<evidence type="ECO:0000255" key="1">
    <source>
        <dbReference type="HAMAP-Rule" id="MF_01241"/>
    </source>
</evidence>
<organism>
    <name type="scientific">Listeria monocytogenes serotype 4a (strain HCC23)</name>
    <dbReference type="NCBI Taxonomy" id="552536"/>
    <lineage>
        <taxon>Bacteria</taxon>
        <taxon>Bacillati</taxon>
        <taxon>Bacillota</taxon>
        <taxon>Bacilli</taxon>
        <taxon>Bacillales</taxon>
        <taxon>Listeriaceae</taxon>
        <taxon>Listeria</taxon>
    </lineage>
</organism>
<accession>B8DEH8</accession>
<gene>
    <name evidence="1" type="primary">nagB</name>
    <name type="ordered locus">LMHCC_1665</name>
</gene>
<keyword id="KW-0119">Carbohydrate metabolism</keyword>
<keyword id="KW-0378">Hydrolase</keyword>
<reference key="1">
    <citation type="journal article" date="2011" name="J. Bacteriol.">
        <title>Genome sequence of lineage III Listeria monocytogenes strain HCC23.</title>
        <authorList>
            <person name="Steele C.L."/>
            <person name="Donaldson J.R."/>
            <person name="Paul D."/>
            <person name="Banes M.M."/>
            <person name="Arick T."/>
            <person name="Bridges S.M."/>
            <person name="Lawrence M.L."/>
        </authorList>
    </citation>
    <scope>NUCLEOTIDE SEQUENCE [LARGE SCALE GENOMIC DNA]</scope>
    <source>
        <strain>HCC23</strain>
    </source>
</reference>